<reference key="1">
    <citation type="journal article" date="1990" name="Virology">
        <title>The complete DNA sequence of vaccinia virus.</title>
        <authorList>
            <person name="Goebel S.J."/>
            <person name="Johnson G.P."/>
            <person name="Perkus M.E."/>
            <person name="Davis S.W."/>
            <person name="Winslow J.P."/>
            <person name="Paoletti E."/>
        </authorList>
    </citation>
    <scope>NUCLEOTIDE SEQUENCE [LARGE SCALE GENOMIC DNA]</scope>
</reference>
<reference key="2">
    <citation type="journal article" date="1990" name="Virology">
        <title>Appendix to 'The complete DNA sequence of vaccinia virus'.</title>
        <authorList>
            <person name="Goebel S.J."/>
            <person name="Johnson G.P."/>
            <person name="Perkus M.E."/>
            <person name="Davis S.W."/>
            <person name="Winslow J.P."/>
            <person name="Paoletti E."/>
        </authorList>
    </citation>
    <scope>NUCLEOTIDE SEQUENCE [LARGE SCALE GENOMIC DNA]</scope>
</reference>
<organism>
    <name type="scientific">Vaccinia virus (strain Copenhagen)</name>
    <name type="common">VACV</name>
    <dbReference type="NCBI Taxonomy" id="10249"/>
    <lineage>
        <taxon>Viruses</taxon>
        <taxon>Varidnaviria</taxon>
        <taxon>Bamfordvirae</taxon>
        <taxon>Nucleocytoviricota</taxon>
        <taxon>Pokkesviricetes</taxon>
        <taxon>Chitovirales</taxon>
        <taxon>Poxviridae</taxon>
        <taxon>Chordopoxvirinae</taxon>
        <taxon>Orthopoxvirus</taxon>
        <taxon>Vaccinia virus</taxon>
    </lineage>
</organism>
<evidence type="ECO:0000250" key="1">
    <source>
        <dbReference type="UniProtKB" id="P68444"/>
    </source>
</evidence>
<evidence type="ECO:0000255" key="2"/>
<evidence type="ECO:0000305" key="3"/>
<proteinExistence type="inferred from homology"/>
<protein>
    <recommendedName>
        <fullName>Protein OPG192</fullName>
    </recommendedName>
</protein>
<sequence length="182" mass="21312">MYKKLITFLFVIGALASYSNNEYTPFNKLSVKLYIDGVDNIENSYTDDNNELVLNFKEYTISIITESCDVGFDSIDIDVINDYKIIDMYTIDSSTIQRRGHTCRISTKLSCHYDKYPYIHKYDGDERQYSITAEGKCYKGIKYEISMINDDTLLRKHTLKIGSTYIFDRHGHSNTYYSKYDF</sequence>
<feature type="signal peptide" evidence="2">
    <location>
        <begin position="1"/>
        <end position="16"/>
    </location>
</feature>
<feature type="chain" id="PRO_0000040606" description="Protein OPG192">
    <location>
        <begin position="17"/>
        <end position="182"/>
    </location>
</feature>
<keyword id="KW-1038">Host endoplasmic reticulum</keyword>
<keyword id="KW-1185">Reference proteome</keyword>
<keyword id="KW-0732">Signal</keyword>
<dbReference type="EMBL" id="M35027">
    <property type="protein sequence ID" value="AAA48204.1"/>
    <property type="molecule type" value="Genomic_DNA"/>
</dbReference>
<dbReference type="PIR" id="JQ1801">
    <property type="entry name" value="JQ1801"/>
</dbReference>
<dbReference type="Proteomes" id="UP000008269">
    <property type="component" value="Segment"/>
</dbReference>
<dbReference type="GO" id="GO:0044165">
    <property type="term" value="C:host cell endoplasmic reticulum"/>
    <property type="evidence" value="ECO:0007669"/>
    <property type="project" value="UniProtKB-SubCell"/>
</dbReference>
<dbReference type="InterPro" id="IPR010806">
    <property type="entry name" value="Poxvirus_TNF-rcpt-II_C"/>
</dbReference>
<dbReference type="InterPro" id="IPR009176">
    <property type="entry name" value="Vaccinia_virus_B7/C8"/>
</dbReference>
<dbReference type="Pfam" id="PF07190">
    <property type="entry name" value="CrmD_SECRET"/>
    <property type="match status" value="1"/>
</dbReference>
<dbReference type="PIRSF" id="PIRSF003778">
    <property type="entry name" value="VAC_C8L"/>
    <property type="match status" value="1"/>
</dbReference>
<name>PG192_VACCC</name>
<organismHost>
    <name type="scientific">Homo sapiens</name>
    <name type="common">Human</name>
    <dbReference type="NCBI Taxonomy" id="9606"/>
</organismHost>
<comment type="subcellular location">
    <subcellularLocation>
        <location evidence="1">Host endoplasmic reticulum</location>
    </subcellularLocation>
</comment>
<comment type="similarity">
    <text evidence="3">Belongs to the orthopoxvirus OPG192 family.</text>
</comment>
<accession>P68445</accession>
<accession>P21003</accession>
<gene>
    <name type="primary">OPG192</name>
    <name type="ORF">B7R</name>
</gene>